<organism>
    <name type="scientific">Dictyostelium discoideum</name>
    <name type="common">Social amoeba</name>
    <dbReference type="NCBI Taxonomy" id="44689"/>
    <lineage>
        <taxon>Eukaryota</taxon>
        <taxon>Amoebozoa</taxon>
        <taxon>Evosea</taxon>
        <taxon>Eumycetozoa</taxon>
        <taxon>Dictyostelia</taxon>
        <taxon>Dictyosteliales</taxon>
        <taxon>Dictyosteliaceae</taxon>
        <taxon>Dictyostelium</taxon>
    </lineage>
</organism>
<comment type="function">
    <text evidence="1">Probable catalytic subunit of the gamma-secretase complex, an endoprotease complex that catalyzes the intramembrane cleavage of integral membrane proteins such as Notch receptors. Requires the other members of the gamma-secretase complex to have a protease activity (By similarity).</text>
</comment>
<comment type="subunit">
    <text evidence="1">Homodimer. Component of the gamma-secretase complex, a complex composed of a presenilin homodimer, nicastrin, aph1 and pen2 (By similarity).</text>
</comment>
<comment type="subcellular location">
    <subcellularLocation>
        <location evidence="1">Endoplasmic reticulum membrane</location>
        <topology evidence="1">Multi-pass membrane protein</topology>
    </subcellularLocation>
    <subcellularLocation>
        <location evidence="1">Golgi apparatus membrane</location>
        <topology evidence="1">Multi-pass membrane protein</topology>
    </subcellularLocation>
</comment>
<comment type="domain">
    <text evidence="1">The PAL motif is required for normal active site conformation.</text>
</comment>
<comment type="similarity">
    <text evidence="4">Belongs to the peptidase A22A family.</text>
</comment>
<feature type="chain" id="PRO_0000331267" description="Presenilin-A">
    <location>
        <begin position="1"/>
        <end position="622"/>
    </location>
</feature>
<feature type="topological domain" description="Cytoplasmic" evidence="2">
    <location>
        <begin position="1"/>
        <end position="168"/>
    </location>
</feature>
<feature type="transmembrane region" description="Helical" evidence="2">
    <location>
        <begin position="169"/>
        <end position="189"/>
    </location>
</feature>
<feature type="topological domain" description="Lumenal" evidence="2">
    <location>
        <begin position="190"/>
        <end position="227"/>
    </location>
</feature>
<feature type="transmembrane region" description="Helical" evidence="2">
    <location>
        <begin position="228"/>
        <end position="248"/>
    </location>
</feature>
<feature type="topological domain" description="Cytoplasmic" evidence="2">
    <location>
        <begin position="249"/>
        <end position="265"/>
    </location>
</feature>
<feature type="transmembrane region" description="Helical" evidence="2">
    <location>
        <begin position="266"/>
        <end position="286"/>
    </location>
</feature>
<feature type="topological domain" description="Lumenal" evidence="2">
    <location>
        <begin position="287"/>
        <end position="289"/>
    </location>
</feature>
<feature type="transmembrane region" description="Helical" evidence="2">
    <location>
        <begin position="290"/>
        <end position="310"/>
    </location>
</feature>
<feature type="topological domain" description="Cytoplasmic" evidence="2">
    <location>
        <position position="311"/>
    </location>
</feature>
<feature type="transmembrane region" description="Helical" evidence="2">
    <location>
        <begin position="312"/>
        <end position="332"/>
    </location>
</feature>
<feature type="topological domain" description="Lumenal" evidence="2">
    <location>
        <begin position="333"/>
        <end position="341"/>
    </location>
</feature>
<feature type="transmembrane region" description="Helical" evidence="2">
    <location>
        <begin position="342"/>
        <end position="362"/>
    </location>
</feature>
<feature type="topological domain" description="Cytoplasmic" evidence="2">
    <location>
        <begin position="363"/>
        <end position="538"/>
    </location>
</feature>
<feature type="transmembrane region" description="Helical" evidence="2">
    <location>
        <begin position="539"/>
        <end position="559"/>
    </location>
</feature>
<feature type="topological domain" description="Lumenal" evidence="2">
    <location>
        <begin position="560"/>
        <end position="562"/>
    </location>
</feature>
<feature type="transmembrane region" description="Helical" evidence="2">
    <location>
        <begin position="563"/>
        <end position="583"/>
    </location>
</feature>
<feature type="topological domain" description="Cytoplasmic" evidence="2">
    <location>
        <begin position="584"/>
        <end position="588"/>
    </location>
</feature>
<feature type="intramembrane region" description="Helical" evidence="2">
    <location>
        <begin position="589"/>
        <end position="609"/>
    </location>
</feature>
<feature type="topological domain" description="Cytoplasmic" evidence="2">
    <location>
        <begin position="610"/>
        <end position="622"/>
    </location>
</feature>
<feature type="region of interest" description="Disordered" evidence="3">
    <location>
        <begin position="1"/>
        <end position="65"/>
    </location>
</feature>
<feature type="region of interest" description="Disordered" evidence="3">
    <location>
        <begin position="132"/>
        <end position="160"/>
    </location>
</feature>
<feature type="region of interest" description="Disordered" evidence="3">
    <location>
        <begin position="419"/>
        <end position="477"/>
    </location>
</feature>
<feature type="short sequence motif" description="PAL">
    <location>
        <begin position="588"/>
        <end position="590"/>
    </location>
</feature>
<feature type="compositionally biased region" description="Basic and acidic residues" evidence="3">
    <location>
        <begin position="1"/>
        <end position="16"/>
    </location>
</feature>
<feature type="compositionally biased region" description="Low complexity" evidence="3">
    <location>
        <begin position="21"/>
        <end position="62"/>
    </location>
</feature>
<feature type="compositionally biased region" description="Acidic residues" evidence="3">
    <location>
        <begin position="147"/>
        <end position="160"/>
    </location>
</feature>
<feature type="compositionally biased region" description="Low complexity" evidence="3">
    <location>
        <begin position="432"/>
        <end position="466"/>
    </location>
</feature>
<feature type="active site" evidence="1">
    <location>
        <position position="351"/>
    </location>
</feature>
<feature type="active site" evidence="1">
    <location>
        <position position="543"/>
    </location>
</feature>
<proteinExistence type="inferred from homology"/>
<gene>
    <name type="primary">psenA</name>
    <name type="ORF">DDB_G0291352</name>
</gene>
<accession>Q54ET2</accession>
<reference key="1">
    <citation type="journal article" date="2005" name="Nature">
        <title>The genome of the social amoeba Dictyostelium discoideum.</title>
        <authorList>
            <person name="Eichinger L."/>
            <person name="Pachebat J.A."/>
            <person name="Gloeckner G."/>
            <person name="Rajandream M.A."/>
            <person name="Sucgang R."/>
            <person name="Berriman M."/>
            <person name="Song J."/>
            <person name="Olsen R."/>
            <person name="Szafranski K."/>
            <person name="Xu Q."/>
            <person name="Tunggal B."/>
            <person name="Kummerfeld S."/>
            <person name="Madera M."/>
            <person name="Konfortov B.A."/>
            <person name="Rivero F."/>
            <person name="Bankier A.T."/>
            <person name="Lehmann R."/>
            <person name="Hamlin N."/>
            <person name="Davies R."/>
            <person name="Gaudet P."/>
            <person name="Fey P."/>
            <person name="Pilcher K."/>
            <person name="Chen G."/>
            <person name="Saunders D."/>
            <person name="Sodergren E.J."/>
            <person name="Davis P."/>
            <person name="Kerhornou A."/>
            <person name="Nie X."/>
            <person name="Hall N."/>
            <person name="Anjard C."/>
            <person name="Hemphill L."/>
            <person name="Bason N."/>
            <person name="Farbrother P."/>
            <person name="Desany B."/>
            <person name="Just E."/>
            <person name="Morio T."/>
            <person name="Rost R."/>
            <person name="Churcher C.M."/>
            <person name="Cooper J."/>
            <person name="Haydock S."/>
            <person name="van Driessche N."/>
            <person name="Cronin A."/>
            <person name="Goodhead I."/>
            <person name="Muzny D.M."/>
            <person name="Mourier T."/>
            <person name="Pain A."/>
            <person name="Lu M."/>
            <person name="Harper D."/>
            <person name="Lindsay R."/>
            <person name="Hauser H."/>
            <person name="James K.D."/>
            <person name="Quiles M."/>
            <person name="Madan Babu M."/>
            <person name="Saito T."/>
            <person name="Buchrieser C."/>
            <person name="Wardroper A."/>
            <person name="Felder M."/>
            <person name="Thangavelu M."/>
            <person name="Johnson D."/>
            <person name="Knights A."/>
            <person name="Loulseged H."/>
            <person name="Mungall K.L."/>
            <person name="Oliver K."/>
            <person name="Price C."/>
            <person name="Quail M.A."/>
            <person name="Urushihara H."/>
            <person name="Hernandez J."/>
            <person name="Rabbinowitsch E."/>
            <person name="Steffen D."/>
            <person name="Sanders M."/>
            <person name="Ma J."/>
            <person name="Kohara Y."/>
            <person name="Sharp S."/>
            <person name="Simmonds M.N."/>
            <person name="Spiegler S."/>
            <person name="Tivey A."/>
            <person name="Sugano S."/>
            <person name="White B."/>
            <person name="Walker D."/>
            <person name="Woodward J.R."/>
            <person name="Winckler T."/>
            <person name="Tanaka Y."/>
            <person name="Shaulsky G."/>
            <person name="Schleicher M."/>
            <person name="Weinstock G.M."/>
            <person name="Rosenthal A."/>
            <person name="Cox E.C."/>
            <person name="Chisholm R.L."/>
            <person name="Gibbs R.A."/>
            <person name="Loomis W.F."/>
            <person name="Platzer M."/>
            <person name="Kay R.R."/>
            <person name="Williams J.G."/>
            <person name="Dear P.H."/>
            <person name="Noegel A.A."/>
            <person name="Barrell B.G."/>
            <person name="Kuspa A."/>
        </authorList>
    </citation>
    <scope>NUCLEOTIDE SEQUENCE [LARGE SCALE GENOMIC DNA]</scope>
    <source>
        <strain>AX4</strain>
    </source>
</reference>
<dbReference type="EC" id="3.4.23.-"/>
<dbReference type="EMBL" id="AAFI02000177">
    <property type="protein sequence ID" value="EAL61660.1"/>
    <property type="molecule type" value="Genomic_DNA"/>
</dbReference>
<dbReference type="RefSeq" id="XP_635158.1">
    <property type="nucleotide sequence ID" value="XM_630066.1"/>
</dbReference>
<dbReference type="SMR" id="Q54ET2"/>
<dbReference type="FunCoup" id="Q54ET2">
    <property type="interactions" value="305"/>
</dbReference>
<dbReference type="STRING" id="44689.Q54ET2"/>
<dbReference type="MEROPS" id="A22.A09"/>
<dbReference type="PaxDb" id="44689-DDB0231427"/>
<dbReference type="EnsemblProtists" id="EAL61660">
    <property type="protein sequence ID" value="EAL61660"/>
    <property type="gene ID" value="DDB_G0291352"/>
</dbReference>
<dbReference type="GeneID" id="8628104"/>
<dbReference type="KEGG" id="ddi:DDB_G0291352"/>
<dbReference type="dictyBase" id="DDB_G0291352">
    <property type="gene designation" value="psenA"/>
</dbReference>
<dbReference type="VEuPathDB" id="AmoebaDB:DDB_G0291352"/>
<dbReference type="eggNOG" id="KOG2736">
    <property type="taxonomic scope" value="Eukaryota"/>
</dbReference>
<dbReference type="HOGENOM" id="CLU_022975_1_1_1"/>
<dbReference type="InParanoid" id="Q54ET2"/>
<dbReference type="OMA" id="INHQEND"/>
<dbReference type="PhylomeDB" id="Q54ET2"/>
<dbReference type="Reactome" id="R-DDI-6798695">
    <property type="pathway name" value="Neutrophil degranulation"/>
</dbReference>
<dbReference type="PRO" id="PR:Q54ET2"/>
<dbReference type="Proteomes" id="UP000002195">
    <property type="component" value="Chromosome 6"/>
</dbReference>
<dbReference type="GO" id="GO:0005789">
    <property type="term" value="C:endoplasmic reticulum membrane"/>
    <property type="evidence" value="ECO:0007669"/>
    <property type="project" value="UniProtKB-SubCell"/>
</dbReference>
<dbReference type="GO" id="GO:0070765">
    <property type="term" value="C:gamma-secretase complex"/>
    <property type="evidence" value="ECO:0000315"/>
    <property type="project" value="dictyBase"/>
</dbReference>
<dbReference type="GO" id="GO:0000139">
    <property type="term" value="C:Golgi membrane"/>
    <property type="evidence" value="ECO:0007669"/>
    <property type="project" value="UniProtKB-SubCell"/>
</dbReference>
<dbReference type="GO" id="GO:0045121">
    <property type="term" value="C:membrane raft"/>
    <property type="evidence" value="ECO:0000314"/>
    <property type="project" value="dictyBase"/>
</dbReference>
<dbReference type="GO" id="GO:0042500">
    <property type="term" value="F:aspartic endopeptidase activity, intramembrane cleaving"/>
    <property type="evidence" value="ECO:0007669"/>
    <property type="project" value="InterPro"/>
</dbReference>
<dbReference type="GO" id="GO:0004175">
    <property type="term" value="F:endopeptidase activity"/>
    <property type="evidence" value="ECO:0000318"/>
    <property type="project" value="GO_Central"/>
</dbReference>
<dbReference type="GO" id="GO:0034205">
    <property type="term" value="P:amyloid-beta formation"/>
    <property type="evidence" value="ECO:0000318"/>
    <property type="project" value="GO_Central"/>
</dbReference>
<dbReference type="GO" id="GO:0006914">
    <property type="term" value="P:autophagy"/>
    <property type="evidence" value="ECO:0000316"/>
    <property type="project" value="dictyBase"/>
</dbReference>
<dbReference type="GO" id="GO:0055074">
    <property type="term" value="P:calcium ion homeostasis"/>
    <property type="evidence" value="ECO:0000315"/>
    <property type="project" value="dictyBase"/>
</dbReference>
<dbReference type="GO" id="GO:0044351">
    <property type="term" value="P:macropinocytosis"/>
    <property type="evidence" value="ECO:0000316"/>
    <property type="project" value="dictyBase"/>
</dbReference>
<dbReference type="GO" id="GO:0006509">
    <property type="term" value="P:membrane protein ectodomain proteolysis"/>
    <property type="evidence" value="ECO:0000318"/>
    <property type="project" value="GO_Central"/>
</dbReference>
<dbReference type="GO" id="GO:0007219">
    <property type="term" value="P:Notch signaling pathway"/>
    <property type="evidence" value="ECO:0000318"/>
    <property type="project" value="GO_Central"/>
</dbReference>
<dbReference type="GO" id="GO:0006909">
    <property type="term" value="P:phagocytosis"/>
    <property type="evidence" value="ECO:0000316"/>
    <property type="project" value="dictyBase"/>
</dbReference>
<dbReference type="GO" id="GO:0016485">
    <property type="term" value="P:protein processing"/>
    <property type="evidence" value="ECO:0000315"/>
    <property type="project" value="dictyBase"/>
</dbReference>
<dbReference type="GO" id="GO:0106070">
    <property type="term" value="P:regulation of adenylate cyclase-activating G protein-coupled receptor signaling pathway"/>
    <property type="evidence" value="ECO:0000316"/>
    <property type="project" value="dictyBase"/>
</dbReference>
<dbReference type="GO" id="GO:0030587">
    <property type="term" value="P:sorocarp development"/>
    <property type="evidence" value="ECO:0000316"/>
    <property type="project" value="dictyBase"/>
</dbReference>
<dbReference type="GO" id="GO:0044671">
    <property type="term" value="P:sorocarp spore cell differentiation"/>
    <property type="evidence" value="ECO:0000315"/>
    <property type="project" value="dictyBase"/>
</dbReference>
<dbReference type="GO" id="GO:0031149">
    <property type="term" value="P:sorocarp stalk cell differentiation"/>
    <property type="evidence" value="ECO:0000316"/>
    <property type="project" value="dictyBase"/>
</dbReference>
<dbReference type="FunFam" id="1.10.472.100:FF:000003">
    <property type="entry name" value="Presenilin"/>
    <property type="match status" value="1"/>
</dbReference>
<dbReference type="Gene3D" id="1.10.472.100">
    <property type="entry name" value="Presenilin"/>
    <property type="match status" value="1"/>
</dbReference>
<dbReference type="InterPro" id="IPR001108">
    <property type="entry name" value="Peptidase_A22A"/>
</dbReference>
<dbReference type="InterPro" id="IPR006639">
    <property type="entry name" value="Preselin/SPP"/>
</dbReference>
<dbReference type="InterPro" id="IPR042524">
    <property type="entry name" value="Presenilin_C"/>
</dbReference>
<dbReference type="PANTHER" id="PTHR10202">
    <property type="entry name" value="PRESENILIN"/>
    <property type="match status" value="1"/>
</dbReference>
<dbReference type="PANTHER" id="PTHR10202:SF21">
    <property type="entry name" value="PRESENILIN-A"/>
    <property type="match status" value="1"/>
</dbReference>
<dbReference type="Pfam" id="PF01080">
    <property type="entry name" value="Presenilin"/>
    <property type="match status" value="1"/>
</dbReference>
<dbReference type="PRINTS" id="PR01072">
    <property type="entry name" value="PRESENILIN"/>
</dbReference>
<dbReference type="SMART" id="SM00730">
    <property type="entry name" value="PSN"/>
    <property type="match status" value="1"/>
</dbReference>
<name>PSNA_DICDI</name>
<sequence>MKENEDEINKTDEKYKIKNPSNNGNNKNKNNNNNNNNNNNNNNNNNNNNNNNNNNNNNGNSNLENIEGLNKYNIYKKKKGKNESNTSLNNIYISSPNLSERSDNSIGSYCTNKTMKSENSIINIETLFRDSVSEQNSDECGSKVDKDLDEDDDDDDDETEVPELVDYSEMIVSILYPVCITMVIVVLAIRAISSSTSKNSQIVEISNDNSGGNGDSSSGADKMVFDSVVNSLIFLAVIILSTTIMVVLYKFKLMKALYAWLMGTSILLLGVFGGFLFLILLAYLNLGLDYVTFVIVVWNFSVGGIVCIFWYSPKLLNQGYLISISVLMALFFSRLPDWTTWGILSIVSIYDIFAVLCPGGPLRILIETAQKRNENIPAMIYNASIYIGMIYNEDNLENNNNNNNNNNIELNINEVDIENNNNNEDENKNNTEDGNNNNNKNKNNNNNNNNRIENENGAENSSENGSITPPPTIPNFIKDEKEINRSSGSNGFPNFKKCANDNILIGDAETNDEIVSNAESSIDSTISESYVKPKQSIRLGLGDFVFYSVLIGKAASYQITTVFTVFIAIITGLFLTLILLAVFRRALPALPMSIIFGIIVFFLTFKILIQYIYFLGENQIFV</sequence>
<evidence type="ECO:0000250" key="1"/>
<evidence type="ECO:0000255" key="2"/>
<evidence type="ECO:0000256" key="3">
    <source>
        <dbReference type="SAM" id="MobiDB-lite"/>
    </source>
</evidence>
<evidence type="ECO:0000305" key="4"/>
<protein>
    <recommendedName>
        <fullName>Presenilin-A</fullName>
        <shortName>PS-A</shortName>
        <ecNumber>3.4.23.-</ecNumber>
    </recommendedName>
</protein>
<keyword id="KW-0256">Endoplasmic reticulum</keyword>
<keyword id="KW-0333">Golgi apparatus</keyword>
<keyword id="KW-0378">Hydrolase</keyword>
<keyword id="KW-0472">Membrane</keyword>
<keyword id="KW-0914">Notch signaling pathway</keyword>
<keyword id="KW-0645">Protease</keyword>
<keyword id="KW-1185">Reference proteome</keyword>
<keyword id="KW-0812">Transmembrane</keyword>
<keyword id="KW-1133">Transmembrane helix</keyword>